<dbReference type="EC" id="4.2.1.33"/>
<dbReference type="EMBL" id="U06074">
    <property type="protein sequence ID" value="AAA53236.1"/>
    <property type="molecule type" value="Genomic_DNA"/>
</dbReference>
<dbReference type="PIR" id="S43885">
    <property type="entry name" value="S43885"/>
</dbReference>
<dbReference type="SMR" id="P50181"/>
<dbReference type="STRING" id="486.B2G52_08320"/>
<dbReference type="UniPathway" id="UPA00048">
    <property type="reaction ID" value="UER00071"/>
</dbReference>
<dbReference type="GO" id="GO:0009316">
    <property type="term" value="C:3-isopropylmalate dehydratase complex"/>
    <property type="evidence" value="ECO:0007669"/>
    <property type="project" value="InterPro"/>
</dbReference>
<dbReference type="GO" id="GO:0003861">
    <property type="term" value="F:3-isopropylmalate dehydratase activity"/>
    <property type="evidence" value="ECO:0007669"/>
    <property type="project" value="UniProtKB-EC"/>
</dbReference>
<dbReference type="GO" id="GO:0009098">
    <property type="term" value="P:L-leucine biosynthetic process"/>
    <property type="evidence" value="ECO:0007669"/>
    <property type="project" value="UniProtKB-UniPathway"/>
</dbReference>
<dbReference type="CDD" id="cd01577">
    <property type="entry name" value="IPMI_Swivel"/>
    <property type="match status" value="1"/>
</dbReference>
<dbReference type="Gene3D" id="3.20.19.10">
    <property type="entry name" value="Aconitase, domain 4"/>
    <property type="match status" value="1"/>
</dbReference>
<dbReference type="InterPro" id="IPR004431">
    <property type="entry name" value="3-IsopropMal_deHydase_ssu"/>
</dbReference>
<dbReference type="InterPro" id="IPR015928">
    <property type="entry name" value="Aconitase/3IPM_dehydase_swvl"/>
</dbReference>
<dbReference type="InterPro" id="IPR000573">
    <property type="entry name" value="AconitaseA/IPMdHydase_ssu_swvl"/>
</dbReference>
<dbReference type="InterPro" id="IPR033940">
    <property type="entry name" value="IPMI_Swivel"/>
</dbReference>
<dbReference type="InterPro" id="IPR050075">
    <property type="entry name" value="LeuD"/>
</dbReference>
<dbReference type="NCBIfam" id="TIGR00171">
    <property type="entry name" value="leuD"/>
    <property type="match status" value="1"/>
</dbReference>
<dbReference type="NCBIfam" id="NF002458">
    <property type="entry name" value="PRK01641.1"/>
    <property type="match status" value="1"/>
</dbReference>
<dbReference type="PANTHER" id="PTHR43345:SF5">
    <property type="entry name" value="3-ISOPROPYLMALATE DEHYDRATASE SMALL SUBUNIT"/>
    <property type="match status" value="1"/>
</dbReference>
<dbReference type="PANTHER" id="PTHR43345">
    <property type="entry name" value="3-ISOPROPYLMALATE DEHYDRATASE SMALL SUBUNIT 2-RELATED-RELATED"/>
    <property type="match status" value="1"/>
</dbReference>
<dbReference type="Pfam" id="PF00694">
    <property type="entry name" value="Aconitase_C"/>
    <property type="match status" value="1"/>
</dbReference>
<dbReference type="SUPFAM" id="SSF52016">
    <property type="entry name" value="LeuD/IlvD-like"/>
    <property type="match status" value="1"/>
</dbReference>
<gene>
    <name type="primary">leuD</name>
</gene>
<protein>
    <recommendedName>
        <fullName>3-isopropylmalate dehydratase small subunit</fullName>
        <ecNumber>4.2.1.33</ecNumber>
    </recommendedName>
    <alternativeName>
        <fullName>Alpha-IPM isomerase</fullName>
        <shortName>IPMI</shortName>
    </alternativeName>
    <alternativeName>
        <fullName>Isopropylmalate isomerase</fullName>
    </alternativeName>
</protein>
<feature type="chain" id="PRO_0000141843" description="3-isopropylmalate dehydratase small subunit">
    <location>
        <begin position="1" status="less than"/>
        <end position="137"/>
    </location>
</feature>
<feature type="non-terminal residue">
    <location>
        <position position="1"/>
    </location>
</feature>
<evidence type="ECO:0000250" key="1"/>
<evidence type="ECO:0000305" key="2"/>
<proteinExistence type="inferred from homology"/>
<comment type="function">
    <text evidence="1">Catalyzes the isomerization between 2-isopropylmalate and 3-isopropylmalate, via the formation of 2-isopropylmaleate.</text>
</comment>
<comment type="catalytic activity">
    <reaction>
        <text>(2R,3S)-3-isopropylmalate = (2S)-2-isopropylmalate</text>
        <dbReference type="Rhea" id="RHEA:32287"/>
        <dbReference type="ChEBI" id="CHEBI:1178"/>
        <dbReference type="ChEBI" id="CHEBI:35121"/>
        <dbReference type="EC" id="4.2.1.33"/>
    </reaction>
</comment>
<comment type="pathway">
    <text>Amino-acid biosynthesis; L-leucine biosynthesis; L-leucine from 3-methyl-2-oxobutanoate: step 2/4.</text>
</comment>
<comment type="subunit">
    <text>Heterodimer of LeuC and LeuD.</text>
</comment>
<comment type="similarity">
    <text evidence="2">Belongs to the LeuD family. LeuD type 1 subfamily.</text>
</comment>
<reference key="1">
    <citation type="journal article" date="1994" name="Mol. Gen. Genet.">
        <title>The NlaIV restriction and modification genes of Neisseria lactamica are flanked by leucine biosynthesis genes.</title>
        <authorList>
            <person name="Lau P.C.K."/>
            <person name="Forghani F."/>
            <person name="Labbe D."/>
            <person name="Bergeron H."/>
            <person name="Brousseau R."/>
            <person name="Holtke H.J."/>
        </authorList>
    </citation>
    <scope>NUCLEOTIDE SEQUENCE [GENOMIC DNA]</scope>
    <source>
        <strain>ATCC 23970 / DSM 4691 / CCUG 5853 / CIP 72.17 / NCTC 10617 / NCDC A7515</strain>
    </source>
</reference>
<reference key="2">
    <citation type="journal article" date="1994" name="Mol. Gen. Genet.">
        <authorList>
            <person name="Lau P.C.K."/>
            <person name="Forghani F."/>
            <person name="Labbe D."/>
            <person name="Bergeron H."/>
            <person name="Brousseau R."/>
            <person name="Holtke H.J."/>
        </authorList>
    </citation>
    <scope>ERRATUM OF PUBMED:8190068</scope>
</reference>
<keyword id="KW-0028">Amino-acid biosynthesis</keyword>
<keyword id="KW-0100">Branched-chain amino acid biosynthesis</keyword>
<keyword id="KW-0432">Leucine biosynthesis</keyword>
<keyword id="KW-0456">Lyase</keyword>
<sequence>RQILLTRKNFGCGSSREHAPWALDDYGFRAIIAPSFADIFFNNCYKNGLLPIVLTEEQVDRLFKEVEANEGYRLSIDLAEQTLTTPSGETFTFDITEHRKHCLLNGLDEIGLTLQHADEIHAFEEKRRQSQPWLFNG</sequence>
<accession>P50181</accession>
<organism>
    <name type="scientific">Neisseria lactamica</name>
    <dbReference type="NCBI Taxonomy" id="486"/>
    <lineage>
        <taxon>Bacteria</taxon>
        <taxon>Pseudomonadati</taxon>
        <taxon>Pseudomonadota</taxon>
        <taxon>Betaproteobacteria</taxon>
        <taxon>Neisseriales</taxon>
        <taxon>Neisseriaceae</taxon>
        <taxon>Neisseria</taxon>
    </lineage>
</organism>
<name>LEUD_NEILA</name>